<evidence type="ECO:0000250" key="1"/>
<evidence type="ECO:0000256" key="2">
    <source>
        <dbReference type="SAM" id="MobiDB-lite"/>
    </source>
</evidence>
<evidence type="ECO:0000305" key="3"/>
<organism>
    <name type="scientific">Australian bat lyssavirus (isolate Human/AUS/1998)</name>
    <name type="common">ABLV</name>
    <dbReference type="NCBI Taxonomy" id="446562"/>
    <lineage>
        <taxon>Viruses</taxon>
        <taxon>Riboviria</taxon>
        <taxon>Orthornavirae</taxon>
        <taxon>Negarnaviricota</taxon>
        <taxon>Haploviricotina</taxon>
        <taxon>Monjiviricetes</taxon>
        <taxon>Mononegavirales</taxon>
        <taxon>Rhabdoviridae</taxon>
        <taxon>Alpharhabdovirinae</taxon>
        <taxon>Lyssavirus</taxon>
        <taxon>Lyssavirus australis</taxon>
    </lineage>
</organism>
<dbReference type="EMBL" id="AF418014">
    <property type="protein sequence ID" value="AAN05307.1"/>
    <property type="molecule type" value="Genomic_RNA"/>
</dbReference>
<dbReference type="SMR" id="Q8JTH2"/>
<dbReference type="Proteomes" id="UP000006884">
    <property type="component" value="Genome"/>
</dbReference>
<dbReference type="GO" id="GO:0030430">
    <property type="term" value="C:host cell cytoplasm"/>
    <property type="evidence" value="ECO:0007669"/>
    <property type="project" value="UniProtKB-SubCell"/>
</dbReference>
<dbReference type="GO" id="GO:0042025">
    <property type="term" value="C:host cell nucleus"/>
    <property type="evidence" value="ECO:0007669"/>
    <property type="project" value="UniProtKB-SubCell"/>
</dbReference>
<dbReference type="GO" id="GO:0044423">
    <property type="term" value="C:virion component"/>
    <property type="evidence" value="ECO:0007669"/>
    <property type="project" value="UniProtKB-KW"/>
</dbReference>
<dbReference type="GO" id="GO:0003968">
    <property type="term" value="F:RNA-directed RNA polymerase activity"/>
    <property type="evidence" value="ECO:0007669"/>
    <property type="project" value="InterPro"/>
</dbReference>
<dbReference type="GO" id="GO:0052170">
    <property type="term" value="P:symbiont-mediated suppression of host innate immune response"/>
    <property type="evidence" value="ECO:0007669"/>
    <property type="project" value="UniProtKB-KW"/>
</dbReference>
<dbReference type="GO" id="GO:0039563">
    <property type="term" value="P:symbiont-mediated suppression of host JAK-STAT cascade via inhibition of STAT1 activity"/>
    <property type="evidence" value="ECO:0007669"/>
    <property type="project" value="UniProtKB-KW"/>
</dbReference>
<dbReference type="GO" id="GO:0039564">
    <property type="term" value="P:symbiont-mediated suppression of host JAK-STAT cascade via inhibition of STAT2 activity"/>
    <property type="evidence" value="ECO:0007669"/>
    <property type="project" value="UniProtKB-KW"/>
</dbReference>
<dbReference type="GO" id="GO:0039502">
    <property type="term" value="P:symbiont-mediated suppression of host type I interferon-mediated signaling pathway"/>
    <property type="evidence" value="ECO:0007669"/>
    <property type="project" value="UniProtKB-KW"/>
</dbReference>
<dbReference type="GO" id="GO:0019083">
    <property type="term" value="P:viral transcription"/>
    <property type="evidence" value="ECO:0007669"/>
    <property type="project" value="InterPro"/>
</dbReference>
<dbReference type="CDD" id="cd21032">
    <property type="entry name" value="RABV_P-protein-C_like"/>
    <property type="match status" value="1"/>
</dbReference>
<dbReference type="Gene3D" id="6.10.140.1560">
    <property type="match status" value="1"/>
</dbReference>
<dbReference type="Gene3D" id="1.20.120.820">
    <property type="entry name" value="Phosphoprotein, C-terminal domain"/>
    <property type="match status" value="1"/>
</dbReference>
<dbReference type="InterPro" id="IPR004259">
    <property type="entry name" value="PP_M1-like"/>
</dbReference>
<dbReference type="InterPro" id="IPR037199">
    <property type="entry name" value="PP_M1_C"/>
</dbReference>
<dbReference type="InterPro" id="IPR049506">
    <property type="entry name" value="RABV_P-like_C"/>
</dbReference>
<dbReference type="Pfam" id="PF03012">
    <property type="entry name" value="PP_M1"/>
    <property type="match status" value="1"/>
</dbReference>
<dbReference type="SUPFAM" id="SSF118173">
    <property type="entry name" value="Phosphoprotein M1, C-terminal domain"/>
    <property type="match status" value="1"/>
</dbReference>
<reference key="1">
    <citation type="journal article" date="2002" name="Virology">
        <title>Sequence analysis of an isolate from a fatal human infection of Australian bat lyssavirus.</title>
        <authorList>
            <person name="Warrilow D."/>
            <person name="Smith I.L."/>
            <person name="Harrower B."/>
            <person name="Smith G.A."/>
        </authorList>
    </citation>
    <scope>NUCLEOTIDE SEQUENCE [GENOMIC RNA]</scope>
</reference>
<gene>
    <name type="primary">P</name>
</gene>
<keyword id="KW-0024">Alternative initiation</keyword>
<keyword id="KW-0143">Chaperone</keyword>
<keyword id="KW-1035">Host cytoplasm</keyword>
<keyword id="KW-1048">Host nucleus</keyword>
<keyword id="KW-0945">Host-virus interaction</keyword>
<keyword id="KW-1090">Inhibition of host innate immune response by virus</keyword>
<keyword id="KW-1114">Inhibition of host interferon signaling pathway by virus</keyword>
<keyword id="KW-1105">Inhibition of host STAT1 by virus</keyword>
<keyword id="KW-1106">Inhibition of host STAT2 by virus</keyword>
<keyword id="KW-0922">Interferon antiviral system evasion</keyword>
<keyword id="KW-0597">Phosphoprotein</keyword>
<keyword id="KW-0899">Viral immunoevasion</keyword>
<keyword id="KW-0693">Viral RNA replication</keyword>
<keyword id="KW-0946">Virion</keyword>
<organismHost>
    <name type="scientific">Homo sapiens</name>
    <name type="common">Human</name>
    <dbReference type="NCBI Taxonomy" id="9606"/>
</organismHost>
<organismHost>
    <name type="scientific">Pteropus alecto</name>
    <name type="common">Black flying fox</name>
    <dbReference type="NCBI Taxonomy" id="9402"/>
</organismHost>
<organismHost>
    <name type="scientific">Pteropus conspicillatus</name>
    <name type="common">Spectacled flying fox</name>
    <dbReference type="NCBI Taxonomy" id="328804"/>
</organismHost>
<organismHost>
    <name type="scientific">Pteropus poliocephalus</name>
    <name type="common">Grey-headed flying fox</name>
    <dbReference type="NCBI Taxonomy" id="9403"/>
</organismHost>
<organismHost>
    <name type="scientific">Pteropus scapulatus</name>
    <name type="common">Little red flying fox</name>
    <dbReference type="NCBI Taxonomy" id="94117"/>
</organismHost>
<organismHost>
    <name type="scientific">Saccolaimus</name>
    <dbReference type="NCBI Taxonomy" id="446909"/>
</organismHost>
<feature type="chain" id="PRO_0000295245" description="Phosphoprotein">
    <location>
        <begin position="1"/>
        <end position="297"/>
    </location>
</feature>
<feature type="region of interest" description="Disordered" evidence="2">
    <location>
        <begin position="136"/>
        <end position="191"/>
    </location>
</feature>
<feature type="short sequence motif" description="Nuclear export signal" evidence="1">
    <location>
        <begin position="49"/>
        <end position="58"/>
    </location>
</feature>
<feature type="short sequence motif" description="Nuclear localization signal" evidence="1">
    <location>
        <begin position="211"/>
        <end position="214"/>
    </location>
</feature>
<feature type="compositionally biased region" description="Polar residues" evidence="2">
    <location>
        <begin position="136"/>
        <end position="162"/>
    </location>
</feature>
<feature type="modified residue" description="Phosphoserine; by host" evidence="1">
    <location>
        <position position="63"/>
    </location>
</feature>
<feature type="modified residue" description="Phosphoserine; by host PKC" evidence="1">
    <location>
        <position position="210"/>
    </location>
</feature>
<feature type="modified residue" description="Phosphoserine; by host PKC" evidence="1">
    <location>
        <position position="271"/>
    </location>
</feature>
<feature type="splice variant" id="VSP_026885" description="In isoform P5." evidence="3">
    <location>
        <begin position="1"/>
        <end position="82"/>
    </location>
</feature>
<feature type="splice variant" id="VSP_026886" description="In isoform P2." evidence="3">
    <location>
        <begin position="1"/>
        <end position="19"/>
    </location>
</feature>
<comment type="function">
    <text evidence="1">Non catalytic polymerase cofactor and regulatory protein that plays a role in viral transcription and replication. Stabilizes the RNA polymerase L to the N-RNA template and binds the soluble protein N, preventing it from encapsidating non-genomic RNA. Also inhibits host IFN-alpha and IFN-beta signaling by binding and retaining phosphorylated STAT1 in the cytoplasm or by inhibiting the DNA binding of STAT1 in the nucleus (By similarity).</text>
</comment>
<comment type="subunit">
    <text evidence="1">Homotrimer when phosphorylated. This trimer is stabilized by binding to the L protein. Binds soluble protein N, and ribonucleocapsid. Interacts with host STAT1, STAT2 and PML (By similarity).</text>
</comment>
<comment type="subcellular location">
    <molecule>Phosphoprotein</molecule>
    <subcellularLocation>
        <location>Virion</location>
    </subcellularLocation>
    <subcellularLocation>
        <location evidence="1">Host cytoplasm</location>
    </subcellularLocation>
</comment>
<comment type="subcellular location">
    <molecule>Isoform P2</molecule>
    <subcellularLocation>
        <location evidence="1">Host cytoplasm</location>
    </subcellularLocation>
</comment>
<comment type="subcellular location">
    <molecule>Isoform P5</molecule>
    <subcellularLocation>
        <location evidence="1">Host nucleus</location>
    </subcellularLocation>
</comment>
<comment type="alternative products">
    <event type="alternative initiation"/>
    <isoform>
        <id>Q8JTH2-1</id>
        <name>P</name>
        <sequence type="displayed"/>
    </isoform>
    <isoform>
        <id>Q8JTH2-2</id>
        <name>P2</name>
        <sequence type="described" ref="VSP_026886"/>
    </isoform>
    <isoform>
        <id>Q8JTH2-3</id>
        <name>P5</name>
        <sequence type="described" ref="VSP_026885"/>
    </isoform>
</comment>
<comment type="PTM">
    <text evidence="1">Phosphorylated by host PKC and by an unknown kinase.</text>
</comment>
<comment type="similarity">
    <text evidence="3">Belongs to the lyssavirus protein P family.</text>
</comment>
<sequence length="297" mass="33396">MSKIFVNPSAIRAGMADLEMAEETVDLINRNIEDNQAHLQGEPIEVDSLPEDIKKLDISEGRSKSLVDNPQDVECRMSEDFQMDEVEDPNIQFQSYLDNIGIQIVRKMRTGERFFKIWSQTVEEIISYVGVNFPSQSGKTTENKSTQTTPKKVKTEPSSTPAKRSDQLSKTEMAAKTASGPPALEWSTTNDEDDVSVEAEIAHQIAESFSKKYKFPSRSSGIFLYNFEQLKMNLDDIVKEAKSVPGVTSLARDGLRLPLRCILGWVGSSHSKKFQLLVGSEKLNKIMQDDLNRYMSC</sequence>
<protein>
    <recommendedName>
        <fullName>Phosphoprotein</fullName>
        <shortName>Protein P</shortName>
    </recommendedName>
    <alternativeName>
        <fullName>Protein M1</fullName>
    </alternativeName>
</protein>
<proteinExistence type="inferred from homology"/>
<name>PHOSP_ABLVH</name>
<accession>Q8JTH2</accession>